<name>MUTH_SHEB5</name>
<gene>
    <name evidence="1" type="primary">mutH</name>
    <name type="ordered locus">Sbal_1183</name>
</gene>
<dbReference type="EMBL" id="CP000563">
    <property type="protein sequence ID" value="ABN60701.1"/>
    <property type="molecule type" value="Genomic_DNA"/>
</dbReference>
<dbReference type="RefSeq" id="WP_006080761.1">
    <property type="nucleotide sequence ID" value="NC_009052.1"/>
</dbReference>
<dbReference type="SMR" id="A3D1T8"/>
<dbReference type="STRING" id="325240.Sbal_1183"/>
<dbReference type="KEGG" id="sbl:Sbal_1183"/>
<dbReference type="HOGENOM" id="CLU_086669_0_0_6"/>
<dbReference type="OrthoDB" id="5634909at2"/>
<dbReference type="Proteomes" id="UP000001557">
    <property type="component" value="Chromosome"/>
</dbReference>
<dbReference type="GO" id="GO:0005737">
    <property type="term" value="C:cytoplasm"/>
    <property type="evidence" value="ECO:0007669"/>
    <property type="project" value="UniProtKB-SubCell"/>
</dbReference>
<dbReference type="GO" id="GO:0003677">
    <property type="term" value="F:DNA binding"/>
    <property type="evidence" value="ECO:0007669"/>
    <property type="project" value="InterPro"/>
</dbReference>
<dbReference type="GO" id="GO:0004519">
    <property type="term" value="F:endonuclease activity"/>
    <property type="evidence" value="ECO:0007669"/>
    <property type="project" value="UniProtKB-UniRule"/>
</dbReference>
<dbReference type="GO" id="GO:0006304">
    <property type="term" value="P:DNA modification"/>
    <property type="evidence" value="ECO:0007669"/>
    <property type="project" value="InterPro"/>
</dbReference>
<dbReference type="GO" id="GO:0006298">
    <property type="term" value="P:mismatch repair"/>
    <property type="evidence" value="ECO:0007669"/>
    <property type="project" value="UniProtKB-UniRule"/>
</dbReference>
<dbReference type="CDD" id="cd00583">
    <property type="entry name" value="MutH-like"/>
    <property type="match status" value="1"/>
</dbReference>
<dbReference type="Gene3D" id="3.40.600.10">
    <property type="entry name" value="DNA mismatch repair MutH/Restriction endonuclease, type II"/>
    <property type="match status" value="1"/>
</dbReference>
<dbReference type="HAMAP" id="MF_00759">
    <property type="entry name" value="MutH"/>
    <property type="match status" value="1"/>
</dbReference>
<dbReference type="InterPro" id="IPR004230">
    <property type="entry name" value="DNA_mismatch_repair_MutH"/>
</dbReference>
<dbReference type="InterPro" id="IPR011337">
    <property type="entry name" value="DNA_rep_MutH/RE_typeII_Sau3AI"/>
</dbReference>
<dbReference type="InterPro" id="IPR037057">
    <property type="entry name" value="DNA_rep_MutH/T2_RE_sf"/>
</dbReference>
<dbReference type="InterPro" id="IPR011335">
    <property type="entry name" value="Restrct_endonuc-II-like"/>
</dbReference>
<dbReference type="NCBIfam" id="TIGR02248">
    <property type="entry name" value="mutH_TIGR"/>
    <property type="match status" value="1"/>
</dbReference>
<dbReference type="NCBIfam" id="NF003458">
    <property type="entry name" value="PRK05070.1"/>
    <property type="match status" value="1"/>
</dbReference>
<dbReference type="Pfam" id="PF02976">
    <property type="entry name" value="MutH"/>
    <property type="match status" value="1"/>
</dbReference>
<dbReference type="SMART" id="SM00927">
    <property type="entry name" value="MutH"/>
    <property type="match status" value="1"/>
</dbReference>
<dbReference type="SUPFAM" id="SSF52980">
    <property type="entry name" value="Restriction endonuclease-like"/>
    <property type="match status" value="1"/>
</dbReference>
<keyword id="KW-0963">Cytoplasm</keyword>
<keyword id="KW-0227">DNA damage</keyword>
<keyword id="KW-0234">DNA repair</keyword>
<keyword id="KW-0255">Endonuclease</keyword>
<keyword id="KW-0378">Hydrolase</keyword>
<keyword id="KW-0540">Nuclease</keyword>
<keyword id="KW-1185">Reference proteome</keyword>
<proteinExistence type="inferred from homology"/>
<protein>
    <recommendedName>
        <fullName evidence="1">DNA mismatch repair protein MutH</fullName>
    </recommendedName>
    <alternativeName>
        <fullName evidence="1">Methyl-directed mismatch repair protein</fullName>
    </alternativeName>
</protein>
<organism>
    <name type="scientific">Shewanella baltica (strain OS155 / ATCC BAA-1091)</name>
    <dbReference type="NCBI Taxonomy" id="325240"/>
    <lineage>
        <taxon>Bacteria</taxon>
        <taxon>Pseudomonadati</taxon>
        <taxon>Pseudomonadota</taxon>
        <taxon>Gammaproteobacteria</taxon>
        <taxon>Alteromonadales</taxon>
        <taxon>Shewanellaceae</taxon>
        <taxon>Shewanella</taxon>
    </lineage>
</organism>
<sequence length="223" mass="24893">MNRIIPPENLPELLERAHMMAGVSLAQIAAQRGLSVPKDLKRDKGWVGQLIEMELGATAGSKPEQDFLHLGVELKTIPIDSQGRPLETTYVCVAPLSNIQGLTWQNSLVSHKLQRVLWVPVEGERHIPVGERRIGTPILWEPDPQELQLLQQDWEEIMELIALGKVEKLTARHGEVLQLRPKAANSKALTQSIAEDGSLKMTNPRGFYLKTSFTAMILNKVFG</sequence>
<feature type="chain" id="PRO_1000046706" description="DNA mismatch repair protein MutH">
    <location>
        <begin position="1"/>
        <end position="223"/>
    </location>
</feature>
<evidence type="ECO:0000255" key="1">
    <source>
        <dbReference type="HAMAP-Rule" id="MF_00759"/>
    </source>
</evidence>
<comment type="function">
    <text evidence="1">Sequence-specific endonuclease that cleaves unmethylated GATC sequences. It is involved in DNA mismatch repair.</text>
</comment>
<comment type="subcellular location">
    <subcellularLocation>
        <location evidence="1">Cytoplasm</location>
    </subcellularLocation>
</comment>
<comment type="similarity">
    <text evidence="1">Belongs to the MutH family.</text>
</comment>
<accession>A3D1T8</accession>
<reference key="1">
    <citation type="submission" date="2007-02" db="EMBL/GenBank/DDBJ databases">
        <title>Complete sequence of chromosome of Shewanella baltica OS155.</title>
        <authorList>
            <consortium name="US DOE Joint Genome Institute"/>
            <person name="Copeland A."/>
            <person name="Lucas S."/>
            <person name="Lapidus A."/>
            <person name="Barry K."/>
            <person name="Detter J.C."/>
            <person name="Glavina del Rio T."/>
            <person name="Hammon N."/>
            <person name="Israni S."/>
            <person name="Dalin E."/>
            <person name="Tice H."/>
            <person name="Pitluck S."/>
            <person name="Sims D.R."/>
            <person name="Brettin T."/>
            <person name="Bruce D."/>
            <person name="Han C."/>
            <person name="Tapia R."/>
            <person name="Brainard J."/>
            <person name="Schmutz J."/>
            <person name="Larimer F."/>
            <person name="Land M."/>
            <person name="Hauser L."/>
            <person name="Kyrpides N."/>
            <person name="Mikhailova N."/>
            <person name="Brettar I."/>
            <person name="Klappenbach J."/>
            <person name="Konstantinidis K."/>
            <person name="Rodrigues J."/>
            <person name="Tiedje J."/>
            <person name="Richardson P."/>
        </authorList>
    </citation>
    <scope>NUCLEOTIDE SEQUENCE [LARGE SCALE GENOMIC DNA]</scope>
    <source>
        <strain>OS155 / ATCC BAA-1091</strain>
    </source>
</reference>